<keyword id="KW-0131">Cell cycle</keyword>
<keyword id="KW-0132">Cell division</keyword>
<keyword id="KW-0133">Cell shape</keyword>
<keyword id="KW-0961">Cell wall biogenesis/degradation</keyword>
<keyword id="KW-0963">Cytoplasm</keyword>
<keyword id="KW-0274">FAD</keyword>
<keyword id="KW-0285">Flavoprotein</keyword>
<keyword id="KW-0521">NADP</keyword>
<keyword id="KW-0560">Oxidoreductase</keyword>
<keyword id="KW-0573">Peptidoglycan synthesis</keyword>
<organism>
    <name type="scientific">Burkholderia mallei (strain NCTC 10229)</name>
    <dbReference type="NCBI Taxonomy" id="412022"/>
    <lineage>
        <taxon>Bacteria</taxon>
        <taxon>Pseudomonadati</taxon>
        <taxon>Pseudomonadota</taxon>
        <taxon>Betaproteobacteria</taxon>
        <taxon>Burkholderiales</taxon>
        <taxon>Burkholderiaceae</taxon>
        <taxon>Burkholderia</taxon>
        <taxon>pseudomallei group</taxon>
    </lineage>
</organism>
<protein>
    <recommendedName>
        <fullName evidence="1">UDP-N-acetylenolpyruvoylglucosamine reductase</fullName>
        <ecNumber evidence="1">1.3.1.98</ecNumber>
    </recommendedName>
    <alternativeName>
        <fullName evidence="1">UDP-N-acetylmuramate dehydrogenase</fullName>
    </alternativeName>
</protein>
<accession>A2S948</accession>
<sequence length="347" mass="37318">MSRPDSAVSLLPDYSLRAHNTFGFDARARVAARIGSPGQFASLARDPRVAGLDRLVLGGGSNVVFTRDFDGLVLLDEIRGRALVREDDGAWYVEAGGGENWHAFVEWTLAEGMPGLENLALIPGTVGAAPIQNIGAYGLEMKEHFASLRAVDLATGELVEFDAARCAFGYRDSFFKRDGRGRFAIVAVTFRLPKAWTPRIGYADVARELAARGIDARAARARDVFDAVVAIRRAKLPDPLALGNAGSFFKNPVIDAQAFAALRAREPDIVSYPQPDGRVKLAAGWLIDRCGWKGRALGAAAVHERQALVLVNLGGASGADVLALAHAIRRDVLGRFGVELEMEPVCL</sequence>
<evidence type="ECO:0000255" key="1">
    <source>
        <dbReference type="HAMAP-Rule" id="MF_00037"/>
    </source>
</evidence>
<comment type="function">
    <text evidence="1">Cell wall formation.</text>
</comment>
<comment type="catalytic activity">
    <reaction evidence="1">
        <text>UDP-N-acetyl-alpha-D-muramate + NADP(+) = UDP-N-acetyl-3-O-(1-carboxyvinyl)-alpha-D-glucosamine + NADPH + H(+)</text>
        <dbReference type="Rhea" id="RHEA:12248"/>
        <dbReference type="ChEBI" id="CHEBI:15378"/>
        <dbReference type="ChEBI" id="CHEBI:57783"/>
        <dbReference type="ChEBI" id="CHEBI:58349"/>
        <dbReference type="ChEBI" id="CHEBI:68483"/>
        <dbReference type="ChEBI" id="CHEBI:70757"/>
        <dbReference type="EC" id="1.3.1.98"/>
    </reaction>
</comment>
<comment type="cofactor">
    <cofactor evidence="1">
        <name>FAD</name>
        <dbReference type="ChEBI" id="CHEBI:57692"/>
    </cofactor>
</comment>
<comment type="pathway">
    <text evidence="1">Cell wall biogenesis; peptidoglycan biosynthesis.</text>
</comment>
<comment type="subcellular location">
    <subcellularLocation>
        <location evidence="1">Cytoplasm</location>
    </subcellularLocation>
</comment>
<comment type="similarity">
    <text evidence="1">Belongs to the MurB family.</text>
</comment>
<gene>
    <name evidence="1" type="primary">murB</name>
    <name type="ordered locus">BMA10229_A2509</name>
</gene>
<dbReference type="EC" id="1.3.1.98" evidence="1"/>
<dbReference type="EMBL" id="CP000546">
    <property type="protein sequence ID" value="ABN01078.1"/>
    <property type="molecule type" value="Genomic_DNA"/>
</dbReference>
<dbReference type="SMR" id="A2S948"/>
<dbReference type="KEGG" id="bml:BMA10229_A2509"/>
<dbReference type="HOGENOM" id="CLU_035304_0_0_4"/>
<dbReference type="UniPathway" id="UPA00219"/>
<dbReference type="Proteomes" id="UP000002283">
    <property type="component" value="Chromosome I"/>
</dbReference>
<dbReference type="GO" id="GO:0005829">
    <property type="term" value="C:cytosol"/>
    <property type="evidence" value="ECO:0007669"/>
    <property type="project" value="TreeGrafter"/>
</dbReference>
<dbReference type="GO" id="GO:0071949">
    <property type="term" value="F:FAD binding"/>
    <property type="evidence" value="ECO:0007669"/>
    <property type="project" value="InterPro"/>
</dbReference>
<dbReference type="GO" id="GO:0008762">
    <property type="term" value="F:UDP-N-acetylmuramate dehydrogenase activity"/>
    <property type="evidence" value="ECO:0007669"/>
    <property type="project" value="UniProtKB-UniRule"/>
</dbReference>
<dbReference type="GO" id="GO:0051301">
    <property type="term" value="P:cell division"/>
    <property type="evidence" value="ECO:0007669"/>
    <property type="project" value="UniProtKB-KW"/>
</dbReference>
<dbReference type="GO" id="GO:0071555">
    <property type="term" value="P:cell wall organization"/>
    <property type="evidence" value="ECO:0007669"/>
    <property type="project" value="UniProtKB-KW"/>
</dbReference>
<dbReference type="GO" id="GO:0009252">
    <property type="term" value="P:peptidoglycan biosynthetic process"/>
    <property type="evidence" value="ECO:0007669"/>
    <property type="project" value="UniProtKB-UniRule"/>
</dbReference>
<dbReference type="GO" id="GO:0008360">
    <property type="term" value="P:regulation of cell shape"/>
    <property type="evidence" value="ECO:0007669"/>
    <property type="project" value="UniProtKB-KW"/>
</dbReference>
<dbReference type="Gene3D" id="3.30.465.10">
    <property type="match status" value="1"/>
</dbReference>
<dbReference type="Gene3D" id="3.90.78.10">
    <property type="entry name" value="UDP-N-acetylenolpyruvoylglucosamine reductase, C-terminal domain"/>
    <property type="match status" value="1"/>
</dbReference>
<dbReference type="Gene3D" id="3.30.43.10">
    <property type="entry name" value="Uridine Diphospho-n-acetylenolpyruvylglucosamine Reductase, domain 2"/>
    <property type="match status" value="1"/>
</dbReference>
<dbReference type="HAMAP" id="MF_00037">
    <property type="entry name" value="MurB"/>
    <property type="match status" value="1"/>
</dbReference>
<dbReference type="InterPro" id="IPR016166">
    <property type="entry name" value="FAD-bd_PCMH"/>
</dbReference>
<dbReference type="InterPro" id="IPR036318">
    <property type="entry name" value="FAD-bd_PCMH-like_sf"/>
</dbReference>
<dbReference type="InterPro" id="IPR016167">
    <property type="entry name" value="FAD-bd_PCMH_sub1"/>
</dbReference>
<dbReference type="InterPro" id="IPR016169">
    <property type="entry name" value="FAD-bd_PCMH_sub2"/>
</dbReference>
<dbReference type="InterPro" id="IPR003170">
    <property type="entry name" value="MurB"/>
</dbReference>
<dbReference type="InterPro" id="IPR011601">
    <property type="entry name" value="MurB_C"/>
</dbReference>
<dbReference type="InterPro" id="IPR036635">
    <property type="entry name" value="MurB_C_sf"/>
</dbReference>
<dbReference type="InterPro" id="IPR006094">
    <property type="entry name" value="Oxid_FAD_bind_N"/>
</dbReference>
<dbReference type="NCBIfam" id="TIGR00179">
    <property type="entry name" value="murB"/>
    <property type="match status" value="1"/>
</dbReference>
<dbReference type="NCBIfam" id="NF000755">
    <property type="entry name" value="PRK00046.1"/>
    <property type="match status" value="1"/>
</dbReference>
<dbReference type="PANTHER" id="PTHR21071">
    <property type="entry name" value="UDP-N-ACETYLENOLPYRUVOYLGLUCOSAMINE REDUCTASE"/>
    <property type="match status" value="1"/>
</dbReference>
<dbReference type="PANTHER" id="PTHR21071:SF4">
    <property type="entry name" value="UDP-N-ACETYLENOLPYRUVOYLGLUCOSAMINE REDUCTASE"/>
    <property type="match status" value="1"/>
</dbReference>
<dbReference type="Pfam" id="PF01565">
    <property type="entry name" value="FAD_binding_4"/>
    <property type="match status" value="1"/>
</dbReference>
<dbReference type="Pfam" id="PF02873">
    <property type="entry name" value="MurB_C"/>
    <property type="match status" value="1"/>
</dbReference>
<dbReference type="SUPFAM" id="SSF56176">
    <property type="entry name" value="FAD-binding/transporter-associated domain-like"/>
    <property type="match status" value="1"/>
</dbReference>
<dbReference type="SUPFAM" id="SSF56194">
    <property type="entry name" value="Uridine diphospho-N-Acetylenolpyruvylglucosamine reductase, MurB, C-terminal domain"/>
    <property type="match status" value="1"/>
</dbReference>
<dbReference type="PROSITE" id="PS51387">
    <property type="entry name" value="FAD_PCMH"/>
    <property type="match status" value="1"/>
</dbReference>
<name>MURB_BURM9</name>
<reference key="1">
    <citation type="journal article" date="2010" name="Genome Biol. Evol.">
        <title>Continuing evolution of Burkholderia mallei through genome reduction and large-scale rearrangements.</title>
        <authorList>
            <person name="Losada L."/>
            <person name="Ronning C.M."/>
            <person name="DeShazer D."/>
            <person name="Woods D."/>
            <person name="Fedorova N."/>
            <person name="Kim H.S."/>
            <person name="Shabalina S.A."/>
            <person name="Pearson T.R."/>
            <person name="Brinkac L."/>
            <person name="Tan P."/>
            <person name="Nandi T."/>
            <person name="Crabtree J."/>
            <person name="Badger J."/>
            <person name="Beckstrom-Sternberg S."/>
            <person name="Saqib M."/>
            <person name="Schutzer S.E."/>
            <person name="Keim P."/>
            <person name="Nierman W.C."/>
        </authorList>
    </citation>
    <scope>NUCLEOTIDE SEQUENCE [LARGE SCALE GENOMIC DNA]</scope>
    <source>
        <strain>NCTC 10229</strain>
    </source>
</reference>
<proteinExistence type="inferred from homology"/>
<feature type="chain" id="PRO_1000002872" description="UDP-N-acetylenolpyruvoylglucosamine reductase">
    <location>
        <begin position="1"/>
        <end position="347"/>
    </location>
</feature>
<feature type="domain" description="FAD-binding PCMH-type" evidence="1">
    <location>
        <begin position="24"/>
        <end position="195"/>
    </location>
</feature>
<feature type="active site" evidence="1">
    <location>
        <position position="171"/>
    </location>
</feature>
<feature type="active site" description="Proton donor" evidence="1">
    <location>
        <position position="247"/>
    </location>
</feature>
<feature type="active site" evidence="1">
    <location>
        <position position="343"/>
    </location>
</feature>